<feature type="chain" id="PRO_1000020942" description="Protease HtpX">
    <location>
        <begin position="1"/>
        <end position="293"/>
    </location>
</feature>
<feature type="transmembrane region" description="Helical" evidence="1">
    <location>
        <begin position="4"/>
        <end position="24"/>
    </location>
</feature>
<feature type="transmembrane region" description="Helical" evidence="1">
    <location>
        <begin position="34"/>
        <end position="54"/>
    </location>
</feature>
<feature type="transmembrane region" description="Helical" evidence="1">
    <location>
        <begin position="158"/>
        <end position="178"/>
    </location>
</feature>
<feature type="transmembrane region" description="Helical" evidence="1">
    <location>
        <begin position="193"/>
        <end position="213"/>
    </location>
</feature>
<feature type="active site" evidence="1">
    <location>
        <position position="140"/>
    </location>
</feature>
<feature type="binding site" evidence="1">
    <location>
        <position position="139"/>
    </location>
    <ligand>
        <name>Zn(2+)</name>
        <dbReference type="ChEBI" id="CHEBI:29105"/>
        <note>catalytic</note>
    </ligand>
</feature>
<feature type="binding site" evidence="1">
    <location>
        <position position="143"/>
    </location>
    <ligand>
        <name>Zn(2+)</name>
        <dbReference type="ChEBI" id="CHEBI:29105"/>
        <note>catalytic</note>
    </ligand>
</feature>
<feature type="binding site" evidence="1">
    <location>
        <position position="222"/>
    </location>
    <ligand>
        <name>Zn(2+)</name>
        <dbReference type="ChEBI" id="CHEBI:29105"/>
        <note>catalytic</note>
    </ligand>
</feature>
<organism>
    <name type="scientific">Shigella boydii serotype 4 (strain Sb227)</name>
    <dbReference type="NCBI Taxonomy" id="300268"/>
    <lineage>
        <taxon>Bacteria</taxon>
        <taxon>Pseudomonadati</taxon>
        <taxon>Pseudomonadota</taxon>
        <taxon>Gammaproteobacteria</taxon>
        <taxon>Enterobacterales</taxon>
        <taxon>Enterobacteriaceae</taxon>
        <taxon>Shigella</taxon>
    </lineage>
</organism>
<proteinExistence type="inferred from homology"/>
<accession>Q321Y6</accession>
<evidence type="ECO:0000255" key="1">
    <source>
        <dbReference type="HAMAP-Rule" id="MF_00188"/>
    </source>
</evidence>
<sequence>MMRIALFLLTNLAVMVVFGLVLSLTGIQSSSVQGLMIMALLFGFGGSFVSLLMSKWMALRSVGGEVIEQPRNERERWLVNTVATQARQAGIAMPQVAIYHAPDINAFATGARRDASLVAVSTGLLQNMSPDEAEAVIAHEISHIANGDMVTMTLIQGVVNTFVIFISRILAQLAAGFMGGNRDEGEESNGNPLIYFAVATVLELVFGILASIITMWFSRHREFHADAGSAKLVGREKMIAALQRLKTSYEPQEATSMMAFCINGKSKSLSELFMTHPPLDKRIEALRTGEYLK</sequence>
<dbReference type="EC" id="3.4.24.-" evidence="1"/>
<dbReference type="EMBL" id="CP000036">
    <property type="protein sequence ID" value="ABB65872.1"/>
    <property type="molecule type" value="Genomic_DNA"/>
</dbReference>
<dbReference type="RefSeq" id="WP_000984517.1">
    <property type="nucleotide sequence ID" value="NC_007613.1"/>
</dbReference>
<dbReference type="SMR" id="Q321Y6"/>
<dbReference type="MEROPS" id="M48.002"/>
<dbReference type="GeneID" id="93776079"/>
<dbReference type="KEGG" id="sbo:SBO_1244"/>
<dbReference type="HOGENOM" id="CLU_042266_1_0_6"/>
<dbReference type="Proteomes" id="UP000007067">
    <property type="component" value="Chromosome"/>
</dbReference>
<dbReference type="GO" id="GO:0005886">
    <property type="term" value="C:plasma membrane"/>
    <property type="evidence" value="ECO:0007669"/>
    <property type="project" value="UniProtKB-SubCell"/>
</dbReference>
<dbReference type="GO" id="GO:0004222">
    <property type="term" value="F:metalloendopeptidase activity"/>
    <property type="evidence" value="ECO:0007669"/>
    <property type="project" value="UniProtKB-UniRule"/>
</dbReference>
<dbReference type="GO" id="GO:0008270">
    <property type="term" value="F:zinc ion binding"/>
    <property type="evidence" value="ECO:0007669"/>
    <property type="project" value="UniProtKB-UniRule"/>
</dbReference>
<dbReference type="GO" id="GO:0006508">
    <property type="term" value="P:proteolysis"/>
    <property type="evidence" value="ECO:0007669"/>
    <property type="project" value="UniProtKB-KW"/>
</dbReference>
<dbReference type="CDD" id="cd07335">
    <property type="entry name" value="M48B_HtpX_like"/>
    <property type="match status" value="1"/>
</dbReference>
<dbReference type="FunFam" id="3.30.2010.10:FF:000001">
    <property type="entry name" value="Protease HtpX"/>
    <property type="match status" value="1"/>
</dbReference>
<dbReference type="Gene3D" id="3.30.2010.10">
    <property type="entry name" value="Metalloproteases ('zincins'), catalytic domain"/>
    <property type="match status" value="1"/>
</dbReference>
<dbReference type="HAMAP" id="MF_00188">
    <property type="entry name" value="Pept_M48_protease_HtpX"/>
    <property type="match status" value="1"/>
</dbReference>
<dbReference type="InterPro" id="IPR050083">
    <property type="entry name" value="HtpX_protease"/>
</dbReference>
<dbReference type="InterPro" id="IPR022919">
    <property type="entry name" value="Pept_M48_protease_HtpX"/>
</dbReference>
<dbReference type="InterPro" id="IPR001915">
    <property type="entry name" value="Peptidase_M48"/>
</dbReference>
<dbReference type="NCBIfam" id="NF003965">
    <property type="entry name" value="PRK05457.1"/>
    <property type="match status" value="1"/>
</dbReference>
<dbReference type="PANTHER" id="PTHR43221">
    <property type="entry name" value="PROTEASE HTPX"/>
    <property type="match status" value="1"/>
</dbReference>
<dbReference type="PANTHER" id="PTHR43221:SF1">
    <property type="entry name" value="PROTEASE HTPX"/>
    <property type="match status" value="1"/>
</dbReference>
<dbReference type="Pfam" id="PF01435">
    <property type="entry name" value="Peptidase_M48"/>
    <property type="match status" value="1"/>
</dbReference>
<name>HTPX_SHIBS</name>
<gene>
    <name evidence="1" type="primary">htpX</name>
    <name type="ordered locus">SBO_1244</name>
</gene>
<protein>
    <recommendedName>
        <fullName evidence="1">Protease HtpX</fullName>
        <ecNumber evidence="1">3.4.24.-</ecNumber>
    </recommendedName>
    <alternativeName>
        <fullName evidence="1">Heat shock protein HtpX</fullName>
    </alternativeName>
</protein>
<keyword id="KW-0997">Cell inner membrane</keyword>
<keyword id="KW-1003">Cell membrane</keyword>
<keyword id="KW-0378">Hydrolase</keyword>
<keyword id="KW-0472">Membrane</keyword>
<keyword id="KW-0479">Metal-binding</keyword>
<keyword id="KW-0482">Metalloprotease</keyword>
<keyword id="KW-0645">Protease</keyword>
<keyword id="KW-0346">Stress response</keyword>
<keyword id="KW-0812">Transmembrane</keyword>
<keyword id="KW-1133">Transmembrane helix</keyword>
<keyword id="KW-0862">Zinc</keyword>
<comment type="cofactor">
    <cofactor evidence="1">
        <name>Zn(2+)</name>
        <dbReference type="ChEBI" id="CHEBI:29105"/>
    </cofactor>
    <text evidence="1">Binds 1 zinc ion per subunit.</text>
</comment>
<comment type="subcellular location">
    <subcellularLocation>
        <location evidence="1">Cell inner membrane</location>
        <topology evidence="1">Multi-pass membrane protein</topology>
    </subcellularLocation>
</comment>
<comment type="similarity">
    <text evidence="1">Belongs to the peptidase M48B family.</text>
</comment>
<reference key="1">
    <citation type="journal article" date="2005" name="Nucleic Acids Res.">
        <title>Genome dynamics and diversity of Shigella species, the etiologic agents of bacillary dysentery.</title>
        <authorList>
            <person name="Yang F."/>
            <person name="Yang J."/>
            <person name="Zhang X."/>
            <person name="Chen L."/>
            <person name="Jiang Y."/>
            <person name="Yan Y."/>
            <person name="Tang X."/>
            <person name="Wang J."/>
            <person name="Xiong Z."/>
            <person name="Dong J."/>
            <person name="Xue Y."/>
            <person name="Zhu Y."/>
            <person name="Xu X."/>
            <person name="Sun L."/>
            <person name="Chen S."/>
            <person name="Nie H."/>
            <person name="Peng J."/>
            <person name="Xu J."/>
            <person name="Wang Y."/>
            <person name="Yuan Z."/>
            <person name="Wen Y."/>
            <person name="Yao Z."/>
            <person name="Shen Y."/>
            <person name="Qiang B."/>
            <person name="Hou Y."/>
            <person name="Yu J."/>
            <person name="Jin Q."/>
        </authorList>
    </citation>
    <scope>NUCLEOTIDE SEQUENCE [LARGE SCALE GENOMIC DNA]</scope>
    <source>
        <strain>Sb227</strain>
    </source>
</reference>